<protein>
    <recommendedName>
        <fullName evidence="1">Large ribosomal subunit protein bL34</fullName>
    </recommendedName>
    <alternativeName>
        <fullName>50S ribosomal protein L34</fullName>
    </alternativeName>
</protein>
<keyword id="KW-1185">Reference proteome</keyword>
<keyword id="KW-0687">Ribonucleoprotein</keyword>
<keyword id="KW-0689">Ribosomal protein</keyword>
<comment type="similarity">
    <text evidence="1">Belongs to the bacterial ribosomal protein bL34 family.</text>
</comment>
<gene>
    <name type="primary">rpmH</name>
    <name type="ordered locus">PP_0009</name>
</gene>
<reference key="1">
    <citation type="journal article" date="2002" name="Environ. Microbiol.">
        <title>Complete genome sequence and comparative analysis of the metabolically versatile Pseudomonas putida KT2440.</title>
        <authorList>
            <person name="Nelson K.E."/>
            <person name="Weinel C."/>
            <person name="Paulsen I.T."/>
            <person name="Dodson R.J."/>
            <person name="Hilbert H."/>
            <person name="Martins dos Santos V.A.P."/>
            <person name="Fouts D.E."/>
            <person name="Gill S.R."/>
            <person name="Pop M."/>
            <person name="Holmes M."/>
            <person name="Brinkac L.M."/>
            <person name="Beanan M.J."/>
            <person name="DeBoy R.T."/>
            <person name="Daugherty S.C."/>
            <person name="Kolonay J.F."/>
            <person name="Madupu R."/>
            <person name="Nelson W.C."/>
            <person name="White O."/>
            <person name="Peterson J.D."/>
            <person name="Khouri H.M."/>
            <person name="Hance I."/>
            <person name="Chris Lee P."/>
            <person name="Holtzapple E.K."/>
            <person name="Scanlan D."/>
            <person name="Tran K."/>
            <person name="Moazzez A."/>
            <person name="Utterback T.R."/>
            <person name="Rizzo M."/>
            <person name="Lee K."/>
            <person name="Kosack D."/>
            <person name="Moestl D."/>
            <person name="Wedler H."/>
            <person name="Lauber J."/>
            <person name="Stjepandic D."/>
            <person name="Hoheisel J."/>
            <person name="Straetz M."/>
            <person name="Heim S."/>
            <person name="Kiewitz C."/>
            <person name="Eisen J.A."/>
            <person name="Timmis K.N."/>
            <person name="Duesterhoeft A."/>
            <person name="Tuemmler B."/>
            <person name="Fraser C.M."/>
        </authorList>
    </citation>
    <scope>NUCLEOTIDE SEQUENCE [LARGE SCALE GENOMIC DNA]</scope>
    <source>
        <strain>ATCC 47054 / DSM 6125 / CFBP 8728 / NCIMB 11950 / KT2440</strain>
    </source>
</reference>
<evidence type="ECO:0000305" key="1"/>
<sequence length="44" mass="5138">MKRTFQPSTIKRARTHGFRARMATKNGRAVLSRRRAKGRKRLAI</sequence>
<name>RL34_PSEPK</name>
<accession>P0A161</accession>
<accession>P16498</accession>
<organism>
    <name type="scientific">Pseudomonas putida (strain ATCC 47054 / DSM 6125 / CFBP 8728 / NCIMB 11950 / KT2440)</name>
    <dbReference type="NCBI Taxonomy" id="160488"/>
    <lineage>
        <taxon>Bacteria</taxon>
        <taxon>Pseudomonadati</taxon>
        <taxon>Pseudomonadota</taxon>
        <taxon>Gammaproteobacteria</taxon>
        <taxon>Pseudomonadales</taxon>
        <taxon>Pseudomonadaceae</taxon>
        <taxon>Pseudomonas</taxon>
    </lineage>
</organism>
<feature type="chain" id="PRO_0000187443" description="Large ribosomal subunit protein bL34">
    <location>
        <begin position="1"/>
        <end position="44"/>
    </location>
</feature>
<proteinExistence type="inferred from homology"/>
<dbReference type="EMBL" id="AE015451">
    <property type="protein sequence ID" value="AAN65643.1"/>
    <property type="molecule type" value="Genomic_DNA"/>
</dbReference>
<dbReference type="RefSeq" id="NP_742179.1">
    <property type="nucleotide sequence ID" value="NC_002947.4"/>
</dbReference>
<dbReference type="RefSeq" id="WP_003253163.1">
    <property type="nucleotide sequence ID" value="NZ_CP169744.1"/>
</dbReference>
<dbReference type="SMR" id="P0A161"/>
<dbReference type="STRING" id="160488.PP_0009"/>
<dbReference type="PaxDb" id="160488-PP_0009"/>
<dbReference type="GeneID" id="97170756"/>
<dbReference type="KEGG" id="ppu:PP_0009"/>
<dbReference type="PATRIC" id="fig|160488.4.peg.9"/>
<dbReference type="eggNOG" id="COG0230">
    <property type="taxonomic scope" value="Bacteria"/>
</dbReference>
<dbReference type="HOGENOM" id="CLU_129938_2_0_6"/>
<dbReference type="OrthoDB" id="9804164at2"/>
<dbReference type="PhylomeDB" id="P0A161"/>
<dbReference type="BioCyc" id="PPUT160488:G1G01-9-MONOMER"/>
<dbReference type="Proteomes" id="UP000000556">
    <property type="component" value="Chromosome"/>
</dbReference>
<dbReference type="GO" id="GO:1990904">
    <property type="term" value="C:ribonucleoprotein complex"/>
    <property type="evidence" value="ECO:0007669"/>
    <property type="project" value="UniProtKB-KW"/>
</dbReference>
<dbReference type="GO" id="GO:0005840">
    <property type="term" value="C:ribosome"/>
    <property type="evidence" value="ECO:0007669"/>
    <property type="project" value="UniProtKB-KW"/>
</dbReference>
<dbReference type="GO" id="GO:0003735">
    <property type="term" value="F:structural constituent of ribosome"/>
    <property type="evidence" value="ECO:0007669"/>
    <property type="project" value="InterPro"/>
</dbReference>
<dbReference type="GO" id="GO:0006412">
    <property type="term" value="P:translation"/>
    <property type="evidence" value="ECO:0007669"/>
    <property type="project" value="UniProtKB-UniRule"/>
</dbReference>
<dbReference type="FunFam" id="1.10.287.3980:FF:000001">
    <property type="entry name" value="Mitochondrial ribosomal protein L34"/>
    <property type="match status" value="1"/>
</dbReference>
<dbReference type="Gene3D" id="1.10.287.3980">
    <property type="match status" value="1"/>
</dbReference>
<dbReference type="HAMAP" id="MF_00391">
    <property type="entry name" value="Ribosomal_bL34"/>
    <property type="match status" value="1"/>
</dbReference>
<dbReference type="InterPro" id="IPR000271">
    <property type="entry name" value="Ribosomal_bL34"/>
</dbReference>
<dbReference type="InterPro" id="IPR020939">
    <property type="entry name" value="Ribosomal_bL34_CS"/>
</dbReference>
<dbReference type="NCBIfam" id="TIGR01030">
    <property type="entry name" value="rpmH_bact"/>
    <property type="match status" value="1"/>
</dbReference>
<dbReference type="PANTHER" id="PTHR14503:SF4">
    <property type="entry name" value="LARGE RIBOSOMAL SUBUNIT PROTEIN BL34M"/>
    <property type="match status" value="1"/>
</dbReference>
<dbReference type="PANTHER" id="PTHR14503">
    <property type="entry name" value="MITOCHONDRIAL RIBOSOMAL PROTEIN 34 FAMILY MEMBER"/>
    <property type="match status" value="1"/>
</dbReference>
<dbReference type="Pfam" id="PF00468">
    <property type="entry name" value="Ribosomal_L34"/>
    <property type="match status" value="1"/>
</dbReference>
<dbReference type="PROSITE" id="PS00784">
    <property type="entry name" value="RIBOSOMAL_L34"/>
    <property type="match status" value="1"/>
</dbReference>